<keyword id="KW-0963">Cytoplasm</keyword>
<keyword id="KW-0227">DNA damage</keyword>
<keyword id="KW-0234">DNA repair</keyword>
<keyword id="KW-0378">Hydrolase</keyword>
<keyword id="KW-1185">Reference proteome</keyword>
<comment type="function">
    <text evidence="1">Excises uracil residues from the DNA which can arise as a result of misincorporation of dUMP residues by DNA polymerase or due to deamination of cytosine.</text>
</comment>
<comment type="catalytic activity">
    <reaction evidence="1">
        <text>Hydrolyzes single-stranded DNA or mismatched double-stranded DNA and polynucleotides, releasing free uracil.</text>
        <dbReference type="EC" id="3.2.2.27"/>
    </reaction>
</comment>
<comment type="subcellular location">
    <subcellularLocation>
        <location evidence="1">Cytoplasm</location>
    </subcellularLocation>
</comment>
<comment type="similarity">
    <text evidence="1">Belongs to the uracil-DNA glycosylase (UDG) superfamily. UNG family.</text>
</comment>
<feature type="chain" id="PRO_0000176108" description="Uracil-DNA glycosylase">
    <location>
        <begin position="1"/>
        <end position="230"/>
    </location>
</feature>
<feature type="active site" description="Proton acceptor" evidence="1">
    <location>
        <position position="65"/>
    </location>
</feature>
<sequence length="230" mass="26076">MKAFIHTDWWDVLKPEFEKPYYHQLHEFLKNEYRTKNIHPDMYNIFQAFEWTPFADTKVVILGQDPYHGPGQAHGLSFSVLPGVAVPPSLVNIYKELQDDVGCTPVNHGYLESWAKQGVLLLNSVLTVQNGVAFSHAGKGWERLTDVAIQRLSERSTPVVFILWGKAARSKIKLIDTQTNVVLQAPHPSPLSAYRGFFGSKPFSKTNIALTSFGEQPINWQLPEHVNLEH</sequence>
<organism>
    <name type="scientific">Lactiplantibacillus plantarum (strain ATCC BAA-793 / NCIMB 8826 / WCFS1)</name>
    <name type="common">Lactobacillus plantarum</name>
    <dbReference type="NCBI Taxonomy" id="220668"/>
    <lineage>
        <taxon>Bacteria</taxon>
        <taxon>Bacillati</taxon>
        <taxon>Bacillota</taxon>
        <taxon>Bacilli</taxon>
        <taxon>Lactobacillales</taxon>
        <taxon>Lactobacillaceae</taxon>
        <taxon>Lactiplantibacillus</taxon>
    </lineage>
</organism>
<gene>
    <name evidence="1" type="primary">ung</name>
    <name type="ordered locus">lp_0806</name>
</gene>
<protein>
    <recommendedName>
        <fullName evidence="1">Uracil-DNA glycosylase</fullName>
        <shortName evidence="1">UDG</shortName>
        <ecNumber evidence="1">3.2.2.27</ecNumber>
    </recommendedName>
</protein>
<accession>Q88YG1</accession>
<accession>F9UM26</accession>
<proteinExistence type="inferred from homology"/>
<dbReference type="EC" id="3.2.2.27" evidence="1"/>
<dbReference type="EMBL" id="AL935263">
    <property type="protein sequence ID" value="CCC78265.1"/>
    <property type="molecule type" value="Genomic_DNA"/>
</dbReference>
<dbReference type="RefSeq" id="WP_003643980.1">
    <property type="nucleotide sequence ID" value="NC_004567.2"/>
</dbReference>
<dbReference type="RefSeq" id="YP_004888779.1">
    <property type="nucleotide sequence ID" value="NC_004567.2"/>
</dbReference>
<dbReference type="SMR" id="Q88YG1"/>
<dbReference type="STRING" id="220668.lp_0806"/>
<dbReference type="EnsemblBacteria" id="CCC78265">
    <property type="protein sequence ID" value="CCC78265"/>
    <property type="gene ID" value="lp_0806"/>
</dbReference>
<dbReference type="KEGG" id="lpl:lp_0806"/>
<dbReference type="PATRIC" id="fig|220668.9.peg.682"/>
<dbReference type="eggNOG" id="COG0692">
    <property type="taxonomic scope" value="Bacteria"/>
</dbReference>
<dbReference type="HOGENOM" id="CLU_032162_3_0_9"/>
<dbReference type="OrthoDB" id="9804372at2"/>
<dbReference type="PhylomeDB" id="Q88YG1"/>
<dbReference type="Proteomes" id="UP000000432">
    <property type="component" value="Chromosome"/>
</dbReference>
<dbReference type="GO" id="GO:0005737">
    <property type="term" value="C:cytoplasm"/>
    <property type="evidence" value="ECO:0007669"/>
    <property type="project" value="UniProtKB-SubCell"/>
</dbReference>
<dbReference type="GO" id="GO:0004844">
    <property type="term" value="F:uracil DNA N-glycosylase activity"/>
    <property type="evidence" value="ECO:0007669"/>
    <property type="project" value="UniProtKB-UniRule"/>
</dbReference>
<dbReference type="GO" id="GO:0097510">
    <property type="term" value="P:base-excision repair, AP site formation via deaminated base removal"/>
    <property type="evidence" value="ECO:0007669"/>
    <property type="project" value="TreeGrafter"/>
</dbReference>
<dbReference type="CDD" id="cd10027">
    <property type="entry name" value="UDG-F1-like"/>
    <property type="match status" value="1"/>
</dbReference>
<dbReference type="FunFam" id="3.40.470.10:FF:000001">
    <property type="entry name" value="Uracil-DNA glycosylase"/>
    <property type="match status" value="1"/>
</dbReference>
<dbReference type="Gene3D" id="3.40.470.10">
    <property type="entry name" value="Uracil-DNA glycosylase-like domain"/>
    <property type="match status" value="1"/>
</dbReference>
<dbReference type="HAMAP" id="MF_00148">
    <property type="entry name" value="UDG"/>
    <property type="match status" value="1"/>
</dbReference>
<dbReference type="InterPro" id="IPR002043">
    <property type="entry name" value="UDG_fam1"/>
</dbReference>
<dbReference type="InterPro" id="IPR018085">
    <property type="entry name" value="Ura-DNA_Glyclase_AS"/>
</dbReference>
<dbReference type="InterPro" id="IPR005122">
    <property type="entry name" value="Uracil-DNA_glycosylase-like"/>
</dbReference>
<dbReference type="InterPro" id="IPR036895">
    <property type="entry name" value="Uracil-DNA_glycosylase-like_sf"/>
</dbReference>
<dbReference type="NCBIfam" id="NF003588">
    <property type="entry name" value="PRK05254.1-1"/>
    <property type="match status" value="1"/>
</dbReference>
<dbReference type="NCBIfam" id="NF003589">
    <property type="entry name" value="PRK05254.1-2"/>
    <property type="match status" value="1"/>
</dbReference>
<dbReference type="NCBIfam" id="NF003591">
    <property type="entry name" value="PRK05254.1-4"/>
    <property type="match status" value="1"/>
</dbReference>
<dbReference type="NCBIfam" id="NF003592">
    <property type="entry name" value="PRK05254.1-5"/>
    <property type="match status" value="1"/>
</dbReference>
<dbReference type="NCBIfam" id="TIGR00628">
    <property type="entry name" value="ung"/>
    <property type="match status" value="1"/>
</dbReference>
<dbReference type="PANTHER" id="PTHR11264">
    <property type="entry name" value="URACIL-DNA GLYCOSYLASE"/>
    <property type="match status" value="1"/>
</dbReference>
<dbReference type="PANTHER" id="PTHR11264:SF0">
    <property type="entry name" value="URACIL-DNA GLYCOSYLASE"/>
    <property type="match status" value="1"/>
</dbReference>
<dbReference type="Pfam" id="PF03167">
    <property type="entry name" value="UDG"/>
    <property type="match status" value="1"/>
</dbReference>
<dbReference type="SMART" id="SM00986">
    <property type="entry name" value="UDG"/>
    <property type="match status" value="1"/>
</dbReference>
<dbReference type="SMART" id="SM00987">
    <property type="entry name" value="UreE_C"/>
    <property type="match status" value="1"/>
</dbReference>
<dbReference type="SUPFAM" id="SSF52141">
    <property type="entry name" value="Uracil-DNA glycosylase-like"/>
    <property type="match status" value="1"/>
</dbReference>
<dbReference type="PROSITE" id="PS00130">
    <property type="entry name" value="U_DNA_GLYCOSYLASE"/>
    <property type="match status" value="1"/>
</dbReference>
<name>UNG_LACPL</name>
<evidence type="ECO:0000255" key="1">
    <source>
        <dbReference type="HAMAP-Rule" id="MF_00148"/>
    </source>
</evidence>
<reference key="1">
    <citation type="journal article" date="2003" name="Proc. Natl. Acad. Sci. U.S.A.">
        <title>Complete genome sequence of Lactobacillus plantarum WCFS1.</title>
        <authorList>
            <person name="Kleerebezem M."/>
            <person name="Boekhorst J."/>
            <person name="van Kranenburg R."/>
            <person name="Molenaar D."/>
            <person name="Kuipers O.P."/>
            <person name="Leer R."/>
            <person name="Tarchini R."/>
            <person name="Peters S.A."/>
            <person name="Sandbrink H.M."/>
            <person name="Fiers M.W.E.J."/>
            <person name="Stiekema W."/>
            <person name="Klein Lankhorst R.M."/>
            <person name="Bron P.A."/>
            <person name="Hoffer S.M."/>
            <person name="Nierop Groot M.N."/>
            <person name="Kerkhoven R."/>
            <person name="De Vries M."/>
            <person name="Ursing B."/>
            <person name="De Vos W.M."/>
            <person name="Siezen R.J."/>
        </authorList>
    </citation>
    <scope>NUCLEOTIDE SEQUENCE [LARGE SCALE GENOMIC DNA]</scope>
    <source>
        <strain>ATCC BAA-793 / NCIMB 8826 / WCFS1</strain>
    </source>
</reference>
<reference key="2">
    <citation type="journal article" date="2012" name="J. Bacteriol.">
        <title>Complete resequencing and reannotation of the Lactobacillus plantarum WCFS1 genome.</title>
        <authorList>
            <person name="Siezen R.J."/>
            <person name="Francke C."/>
            <person name="Renckens B."/>
            <person name="Boekhorst J."/>
            <person name="Wels M."/>
            <person name="Kleerebezem M."/>
            <person name="van Hijum S.A."/>
        </authorList>
    </citation>
    <scope>NUCLEOTIDE SEQUENCE [LARGE SCALE GENOMIC DNA]</scope>
    <scope>GENOME REANNOTATION</scope>
    <source>
        <strain>ATCC BAA-793 / NCIMB 8826 / WCFS1</strain>
    </source>
</reference>